<evidence type="ECO:0000255" key="1">
    <source>
        <dbReference type="HAMAP-Rule" id="MF_01467"/>
    </source>
</evidence>
<organism>
    <name type="scientific">Aciduliprofundum boonei (strain DSM 19572 / T469)</name>
    <dbReference type="NCBI Taxonomy" id="439481"/>
    <lineage>
        <taxon>Archaea</taxon>
        <taxon>Methanobacteriati</taxon>
        <taxon>Thermoplasmatota</taxon>
        <taxon>DHVE2 group</taxon>
        <taxon>Candidatus Aciduliprofundum</taxon>
    </lineage>
</organism>
<gene>
    <name evidence="1" type="primary">hpt</name>
    <name type="ordered locus">Aboo_0837</name>
    <name type="ORF">ABOONEI_1891</name>
    <name type="ORF">ABOONEI_908</name>
</gene>
<comment type="function">
    <text evidence="1">Catalyzes a salvage reaction resulting in the formation of IMP that is energically less costly than de novo synthesis.</text>
</comment>
<comment type="catalytic activity">
    <reaction evidence="1">
        <text>IMP + diphosphate = hypoxanthine + 5-phospho-alpha-D-ribose 1-diphosphate</text>
        <dbReference type="Rhea" id="RHEA:17973"/>
        <dbReference type="ChEBI" id="CHEBI:17368"/>
        <dbReference type="ChEBI" id="CHEBI:33019"/>
        <dbReference type="ChEBI" id="CHEBI:58017"/>
        <dbReference type="ChEBI" id="CHEBI:58053"/>
        <dbReference type="EC" id="2.4.2.8"/>
    </reaction>
</comment>
<comment type="catalytic activity">
    <reaction evidence="1">
        <text>GMP + diphosphate = guanine + 5-phospho-alpha-D-ribose 1-diphosphate</text>
        <dbReference type="Rhea" id="RHEA:25424"/>
        <dbReference type="ChEBI" id="CHEBI:16235"/>
        <dbReference type="ChEBI" id="CHEBI:33019"/>
        <dbReference type="ChEBI" id="CHEBI:58017"/>
        <dbReference type="ChEBI" id="CHEBI:58115"/>
        <dbReference type="EC" id="2.4.2.8"/>
    </reaction>
</comment>
<comment type="pathway">
    <text evidence="1">Purine metabolism; IMP biosynthesis via salvage pathway; IMP from hypoxanthine: step 1/1.</text>
</comment>
<comment type="subunit">
    <text evidence="1">Homodimer.</text>
</comment>
<comment type="subcellular location">
    <subcellularLocation>
        <location evidence="1">Cytoplasm</location>
    </subcellularLocation>
</comment>
<comment type="similarity">
    <text evidence="1">Belongs to the purine/pyrimidine phosphoribosyltransferase family. Archaeal HPRT subfamily.</text>
</comment>
<reference key="1">
    <citation type="submission" date="2010-02" db="EMBL/GenBank/DDBJ databases">
        <title>Complete sequence of Aciduliprofundum boonei T469.</title>
        <authorList>
            <person name="Lucas S."/>
            <person name="Copeland A."/>
            <person name="Lapidus A."/>
            <person name="Cheng J.-F."/>
            <person name="Bruce D."/>
            <person name="Goodwin L."/>
            <person name="Pitluck S."/>
            <person name="Saunders E."/>
            <person name="Detter J.C."/>
            <person name="Han C."/>
            <person name="Tapia R."/>
            <person name="Land M."/>
            <person name="Hauser L."/>
            <person name="Kyrpides N."/>
            <person name="Mikhailova N."/>
            <person name="Flores G."/>
            <person name="Reysenbach A.-L."/>
            <person name="Woyke T."/>
        </authorList>
    </citation>
    <scope>NUCLEOTIDE SEQUENCE [LARGE SCALE GENOMIC DNA]</scope>
    <source>
        <strain>DSM 19572 / T469</strain>
    </source>
</reference>
<accession>B5IAJ6</accession>
<keyword id="KW-0963">Cytoplasm</keyword>
<keyword id="KW-0328">Glycosyltransferase</keyword>
<keyword id="KW-0660">Purine salvage</keyword>
<keyword id="KW-1185">Reference proteome</keyword>
<keyword id="KW-0808">Transferase</keyword>
<proteinExistence type="inferred from homology"/>
<sequence>MKLLKESLKNAPVIMKGNYPYFIHPLTDGIPEIDPAVLKDAVNEIIKVIDIDNFDKIVAVEAMGLPIGVALSMELTKPMTVIRKRPYGLSGEVMVEQQTGYSKGKLYINSISSQDTLLLVDDVLSTGGTITAVVDGIKKIGAKISDIVVVVNKNRNIKEVEQKIGFKIKTIVNIEIVDGKVKVLD</sequence>
<feature type="chain" id="PRO_0000415446" description="Hypoxanthine/guanine phosphoribosyltransferase">
    <location>
        <begin position="1"/>
        <end position="185"/>
    </location>
</feature>
<protein>
    <recommendedName>
        <fullName evidence="1">Hypoxanthine/guanine phosphoribosyltransferase</fullName>
        <shortName evidence="1">HGPRTase</shortName>
        <ecNumber evidence="1">2.4.2.8</ecNumber>
    </recommendedName>
</protein>
<name>HPRT_ACIB4</name>
<dbReference type="EC" id="2.4.2.8" evidence="1"/>
<dbReference type="EMBL" id="CP001941">
    <property type="protein sequence ID" value="ADD08646.1"/>
    <property type="molecule type" value="Genomic_DNA"/>
</dbReference>
<dbReference type="EMBL" id="DS990530">
    <property type="protein sequence ID" value="EDY34662.1"/>
    <property type="molecule type" value="Genomic_DNA"/>
</dbReference>
<dbReference type="EMBL" id="DS990515">
    <property type="protein sequence ID" value="EDY36970.1"/>
    <property type="molecule type" value="Genomic_DNA"/>
</dbReference>
<dbReference type="RefSeq" id="WP_008082436.1">
    <property type="nucleotide sequence ID" value="NC_013926.1"/>
</dbReference>
<dbReference type="SMR" id="B5IAJ6"/>
<dbReference type="STRING" id="439481.Aboo_0837"/>
<dbReference type="GeneID" id="8827787"/>
<dbReference type="KEGG" id="abi:Aboo_0837"/>
<dbReference type="eggNOG" id="arCOG00030">
    <property type="taxonomic scope" value="Archaea"/>
</dbReference>
<dbReference type="HOGENOM" id="CLU_126376_0_0_2"/>
<dbReference type="OrthoDB" id="8323at2157"/>
<dbReference type="UniPathway" id="UPA00591">
    <property type="reaction ID" value="UER00648"/>
</dbReference>
<dbReference type="Proteomes" id="UP000001400">
    <property type="component" value="Chromosome"/>
</dbReference>
<dbReference type="GO" id="GO:0005737">
    <property type="term" value="C:cytoplasm"/>
    <property type="evidence" value="ECO:0007669"/>
    <property type="project" value="UniProtKB-SubCell"/>
</dbReference>
<dbReference type="GO" id="GO:0052657">
    <property type="term" value="F:guanine phosphoribosyltransferase activity"/>
    <property type="evidence" value="ECO:0007669"/>
    <property type="project" value="RHEA"/>
</dbReference>
<dbReference type="GO" id="GO:0004422">
    <property type="term" value="F:hypoxanthine phosphoribosyltransferase activity"/>
    <property type="evidence" value="ECO:0007669"/>
    <property type="project" value="UniProtKB-UniRule"/>
</dbReference>
<dbReference type="GO" id="GO:0032264">
    <property type="term" value="P:IMP salvage"/>
    <property type="evidence" value="ECO:0007669"/>
    <property type="project" value="UniProtKB-UniRule"/>
</dbReference>
<dbReference type="GO" id="GO:0006166">
    <property type="term" value="P:purine ribonucleoside salvage"/>
    <property type="evidence" value="ECO:0007669"/>
    <property type="project" value="UniProtKB-KW"/>
</dbReference>
<dbReference type="CDD" id="cd06223">
    <property type="entry name" value="PRTases_typeI"/>
    <property type="match status" value="1"/>
</dbReference>
<dbReference type="Gene3D" id="3.40.50.2020">
    <property type="match status" value="1"/>
</dbReference>
<dbReference type="HAMAP" id="MF_01467">
    <property type="entry name" value="Hypx_phosphoribosyltr"/>
    <property type="match status" value="1"/>
</dbReference>
<dbReference type="InterPro" id="IPR026597">
    <property type="entry name" value="HGPRTase-like"/>
</dbReference>
<dbReference type="InterPro" id="IPR000836">
    <property type="entry name" value="PRibTrfase_dom"/>
</dbReference>
<dbReference type="InterPro" id="IPR029057">
    <property type="entry name" value="PRTase-like"/>
</dbReference>
<dbReference type="InterPro" id="IPR050118">
    <property type="entry name" value="Pur/Pyrimidine_PRTase"/>
</dbReference>
<dbReference type="NCBIfam" id="NF040646">
    <property type="entry name" value="HPT_Archaea"/>
    <property type="match status" value="1"/>
</dbReference>
<dbReference type="NCBIfam" id="NF002635">
    <property type="entry name" value="PRK02304.1-4"/>
    <property type="match status" value="1"/>
</dbReference>
<dbReference type="PANTHER" id="PTHR43864">
    <property type="entry name" value="HYPOXANTHINE/GUANINE PHOSPHORIBOSYLTRANSFERASE"/>
    <property type="match status" value="1"/>
</dbReference>
<dbReference type="PANTHER" id="PTHR43864:SF1">
    <property type="entry name" value="XANTHINE PHOSPHORIBOSYLTRANSFERASE"/>
    <property type="match status" value="1"/>
</dbReference>
<dbReference type="Pfam" id="PF00156">
    <property type="entry name" value="Pribosyltran"/>
    <property type="match status" value="1"/>
</dbReference>
<dbReference type="SUPFAM" id="SSF53271">
    <property type="entry name" value="PRTase-like"/>
    <property type="match status" value="1"/>
</dbReference>
<dbReference type="PROSITE" id="PS00103">
    <property type="entry name" value="PUR_PYR_PR_TRANSFER"/>
    <property type="match status" value="1"/>
</dbReference>